<protein>
    <recommendedName>
        <fullName evidence="1">2,3-bisphosphoglycerate-independent phosphoglycerate mutase</fullName>
        <shortName evidence="1">BPG-independent PGAM</shortName>
        <shortName evidence="1">Phosphoglyceromutase</shortName>
        <shortName evidence="1">iPGM</shortName>
        <ecNumber evidence="1">5.4.2.12</ecNumber>
    </recommendedName>
</protein>
<comment type="function">
    <text evidence="1">Catalyzes the interconversion of 2-phosphoglycerate and 3-phosphoglycerate.</text>
</comment>
<comment type="catalytic activity">
    <reaction evidence="1">
        <text>(2R)-2-phosphoglycerate = (2R)-3-phosphoglycerate</text>
        <dbReference type="Rhea" id="RHEA:15901"/>
        <dbReference type="ChEBI" id="CHEBI:58272"/>
        <dbReference type="ChEBI" id="CHEBI:58289"/>
        <dbReference type="EC" id="5.4.2.12"/>
    </reaction>
</comment>
<comment type="cofactor">
    <cofactor evidence="1">
        <name>Mn(2+)</name>
        <dbReference type="ChEBI" id="CHEBI:29035"/>
    </cofactor>
    <text evidence="1">Binds 2 manganese ions per subunit.</text>
</comment>
<comment type="pathway">
    <text evidence="1">Carbohydrate degradation; glycolysis; pyruvate from D-glyceraldehyde 3-phosphate: step 3/5.</text>
</comment>
<comment type="subunit">
    <text evidence="1">Monomer.</text>
</comment>
<comment type="similarity">
    <text evidence="1">Belongs to the BPG-independent phosphoglycerate mutase family.</text>
</comment>
<organism>
    <name type="scientific">Shewanella sp. (strain MR-7)</name>
    <dbReference type="NCBI Taxonomy" id="60481"/>
    <lineage>
        <taxon>Bacteria</taxon>
        <taxon>Pseudomonadati</taxon>
        <taxon>Pseudomonadota</taxon>
        <taxon>Gammaproteobacteria</taxon>
        <taxon>Alteromonadales</taxon>
        <taxon>Shewanellaceae</taxon>
        <taxon>Shewanella</taxon>
    </lineage>
</organism>
<sequence>MTTTKRPIALLILDGWGYRENTHMNAIYHANTPVLDRLNAQYAHGLISGSGLDVGLPDGQMGNSEVGHINLGSGRIVYQELTRISKAIADHEFEQNPALCDAVDAAVKAGGAVHIMGLLSPGGVHSHEEHIEAMCRMAVARGATKVYLHAFLDGRDTPPRSAKGSLSHFDDLFTTLGHGRIASIIGRYFAMDRDNRWDRVSQAYDLITQGKAKFQYDNAVTALEAAYERNENDEFVSSSAITDSEGKVASLNDGDALIFMNFRADRARQITRSFINADFDGFERAVTPKVNFVTLTEYAADIKAPIAYPSENLVNTLGEVLQNRGRTQLRISETEKYAHVTFFFNGGKEEPFNGEDRILINSPKVATYDLQPEMSSTELTDKLVAAIESAQYDVIICNYPNGDMVGHTGNFDAAVKACEAVDACIGRVVDALAKVGGECIITADHGNAEQMTDETTGQAHTAHTSELVPFVFVGRDATIDEGGKLSDVAPTILHLMGETIPAEMTGKPLIHVKE</sequence>
<proteinExistence type="inferred from homology"/>
<reference key="1">
    <citation type="submission" date="2006-08" db="EMBL/GenBank/DDBJ databases">
        <title>Complete sequence of chromosome 1 of Shewanella sp. MR-7.</title>
        <authorList>
            <person name="Copeland A."/>
            <person name="Lucas S."/>
            <person name="Lapidus A."/>
            <person name="Barry K."/>
            <person name="Detter J.C."/>
            <person name="Glavina del Rio T."/>
            <person name="Hammon N."/>
            <person name="Israni S."/>
            <person name="Dalin E."/>
            <person name="Tice H."/>
            <person name="Pitluck S."/>
            <person name="Kiss H."/>
            <person name="Brettin T."/>
            <person name="Bruce D."/>
            <person name="Han C."/>
            <person name="Tapia R."/>
            <person name="Gilna P."/>
            <person name="Schmutz J."/>
            <person name="Larimer F."/>
            <person name="Land M."/>
            <person name="Hauser L."/>
            <person name="Kyrpides N."/>
            <person name="Mikhailova N."/>
            <person name="Nealson K."/>
            <person name="Konstantinidis K."/>
            <person name="Klappenbach J."/>
            <person name="Tiedje J."/>
            <person name="Richardson P."/>
        </authorList>
    </citation>
    <scope>NUCLEOTIDE SEQUENCE [LARGE SCALE GENOMIC DNA]</scope>
    <source>
        <strain>MR-7</strain>
    </source>
</reference>
<feature type="chain" id="PRO_1000064008" description="2,3-bisphosphoglycerate-independent phosphoglycerate mutase">
    <location>
        <begin position="1"/>
        <end position="514"/>
    </location>
</feature>
<feature type="active site" description="Phosphoserine intermediate" evidence="1">
    <location>
        <position position="64"/>
    </location>
</feature>
<feature type="binding site" evidence="1">
    <location>
        <position position="14"/>
    </location>
    <ligand>
        <name>Mn(2+)</name>
        <dbReference type="ChEBI" id="CHEBI:29035"/>
        <label>2</label>
    </ligand>
</feature>
<feature type="binding site" evidence="1">
    <location>
        <position position="64"/>
    </location>
    <ligand>
        <name>Mn(2+)</name>
        <dbReference type="ChEBI" id="CHEBI:29035"/>
        <label>2</label>
    </ligand>
</feature>
<feature type="binding site" evidence="1">
    <location>
        <position position="125"/>
    </location>
    <ligand>
        <name>substrate</name>
    </ligand>
</feature>
<feature type="binding site" evidence="1">
    <location>
        <begin position="155"/>
        <end position="156"/>
    </location>
    <ligand>
        <name>substrate</name>
    </ligand>
</feature>
<feature type="binding site" evidence="1">
    <location>
        <position position="187"/>
    </location>
    <ligand>
        <name>substrate</name>
    </ligand>
</feature>
<feature type="binding site" evidence="1">
    <location>
        <position position="193"/>
    </location>
    <ligand>
        <name>substrate</name>
    </ligand>
</feature>
<feature type="binding site" evidence="1">
    <location>
        <begin position="263"/>
        <end position="266"/>
    </location>
    <ligand>
        <name>substrate</name>
    </ligand>
</feature>
<feature type="binding site" evidence="1">
    <location>
        <position position="336"/>
    </location>
    <ligand>
        <name>substrate</name>
    </ligand>
</feature>
<feature type="binding site" evidence="1">
    <location>
        <position position="403"/>
    </location>
    <ligand>
        <name>Mn(2+)</name>
        <dbReference type="ChEBI" id="CHEBI:29035"/>
        <label>1</label>
    </ligand>
</feature>
<feature type="binding site" evidence="1">
    <location>
        <position position="407"/>
    </location>
    <ligand>
        <name>Mn(2+)</name>
        <dbReference type="ChEBI" id="CHEBI:29035"/>
        <label>1</label>
    </ligand>
</feature>
<feature type="binding site" evidence="1">
    <location>
        <position position="444"/>
    </location>
    <ligand>
        <name>Mn(2+)</name>
        <dbReference type="ChEBI" id="CHEBI:29035"/>
        <label>2</label>
    </ligand>
</feature>
<feature type="binding site" evidence="1">
    <location>
        <position position="445"/>
    </location>
    <ligand>
        <name>Mn(2+)</name>
        <dbReference type="ChEBI" id="CHEBI:29035"/>
        <label>2</label>
    </ligand>
</feature>
<feature type="binding site" evidence="1">
    <location>
        <position position="463"/>
    </location>
    <ligand>
        <name>Mn(2+)</name>
        <dbReference type="ChEBI" id="CHEBI:29035"/>
        <label>1</label>
    </ligand>
</feature>
<dbReference type="EC" id="5.4.2.12" evidence="1"/>
<dbReference type="EMBL" id="CP000444">
    <property type="protein sequence ID" value="ABI41049.1"/>
    <property type="molecule type" value="Genomic_DNA"/>
</dbReference>
<dbReference type="SMR" id="Q0I0Q6"/>
<dbReference type="KEGG" id="shm:Shewmr7_0043"/>
<dbReference type="HOGENOM" id="CLU_026099_2_0_6"/>
<dbReference type="UniPathway" id="UPA00109">
    <property type="reaction ID" value="UER00186"/>
</dbReference>
<dbReference type="GO" id="GO:0005829">
    <property type="term" value="C:cytosol"/>
    <property type="evidence" value="ECO:0007669"/>
    <property type="project" value="TreeGrafter"/>
</dbReference>
<dbReference type="GO" id="GO:0030145">
    <property type="term" value="F:manganese ion binding"/>
    <property type="evidence" value="ECO:0007669"/>
    <property type="project" value="UniProtKB-UniRule"/>
</dbReference>
<dbReference type="GO" id="GO:0004619">
    <property type="term" value="F:phosphoglycerate mutase activity"/>
    <property type="evidence" value="ECO:0007669"/>
    <property type="project" value="UniProtKB-EC"/>
</dbReference>
<dbReference type="GO" id="GO:0006007">
    <property type="term" value="P:glucose catabolic process"/>
    <property type="evidence" value="ECO:0007669"/>
    <property type="project" value="InterPro"/>
</dbReference>
<dbReference type="GO" id="GO:0006096">
    <property type="term" value="P:glycolytic process"/>
    <property type="evidence" value="ECO:0007669"/>
    <property type="project" value="UniProtKB-UniRule"/>
</dbReference>
<dbReference type="CDD" id="cd16010">
    <property type="entry name" value="iPGM"/>
    <property type="match status" value="1"/>
</dbReference>
<dbReference type="FunFam" id="3.40.1450.10:FF:000001">
    <property type="entry name" value="2,3-bisphosphoglycerate-independent phosphoglycerate mutase"/>
    <property type="match status" value="1"/>
</dbReference>
<dbReference type="FunFam" id="3.40.720.10:FF:000001">
    <property type="entry name" value="2,3-bisphosphoglycerate-independent phosphoglycerate mutase"/>
    <property type="match status" value="1"/>
</dbReference>
<dbReference type="Gene3D" id="3.40.720.10">
    <property type="entry name" value="Alkaline Phosphatase, subunit A"/>
    <property type="match status" value="1"/>
</dbReference>
<dbReference type="Gene3D" id="3.40.1450.10">
    <property type="entry name" value="BPG-independent phosphoglycerate mutase, domain B"/>
    <property type="match status" value="1"/>
</dbReference>
<dbReference type="HAMAP" id="MF_01038">
    <property type="entry name" value="GpmI"/>
    <property type="match status" value="1"/>
</dbReference>
<dbReference type="InterPro" id="IPR017850">
    <property type="entry name" value="Alkaline_phosphatase_core_sf"/>
</dbReference>
<dbReference type="InterPro" id="IPR011258">
    <property type="entry name" value="BPG-indep_PGM_N"/>
</dbReference>
<dbReference type="InterPro" id="IPR006124">
    <property type="entry name" value="Metalloenzyme"/>
</dbReference>
<dbReference type="InterPro" id="IPR036646">
    <property type="entry name" value="PGAM_B_sf"/>
</dbReference>
<dbReference type="InterPro" id="IPR005995">
    <property type="entry name" value="Pgm_bpd_ind"/>
</dbReference>
<dbReference type="NCBIfam" id="TIGR01307">
    <property type="entry name" value="pgm_bpd_ind"/>
    <property type="match status" value="1"/>
</dbReference>
<dbReference type="NCBIfam" id="NF003897">
    <property type="entry name" value="PRK05434.1-5"/>
    <property type="match status" value="1"/>
</dbReference>
<dbReference type="PANTHER" id="PTHR31637">
    <property type="entry name" value="2,3-BISPHOSPHOGLYCERATE-INDEPENDENT PHOSPHOGLYCERATE MUTASE"/>
    <property type="match status" value="1"/>
</dbReference>
<dbReference type="PANTHER" id="PTHR31637:SF0">
    <property type="entry name" value="2,3-BISPHOSPHOGLYCERATE-INDEPENDENT PHOSPHOGLYCERATE MUTASE"/>
    <property type="match status" value="1"/>
</dbReference>
<dbReference type="Pfam" id="PF06415">
    <property type="entry name" value="iPGM_N"/>
    <property type="match status" value="1"/>
</dbReference>
<dbReference type="Pfam" id="PF01676">
    <property type="entry name" value="Metalloenzyme"/>
    <property type="match status" value="1"/>
</dbReference>
<dbReference type="PIRSF" id="PIRSF001492">
    <property type="entry name" value="IPGAM"/>
    <property type="match status" value="1"/>
</dbReference>
<dbReference type="SUPFAM" id="SSF64158">
    <property type="entry name" value="2,3-Bisphosphoglycerate-independent phosphoglycerate mutase, substrate-binding domain"/>
    <property type="match status" value="1"/>
</dbReference>
<dbReference type="SUPFAM" id="SSF53649">
    <property type="entry name" value="Alkaline phosphatase-like"/>
    <property type="match status" value="1"/>
</dbReference>
<gene>
    <name evidence="1" type="primary">gpmI</name>
    <name type="ordered locus">Shewmr7_0043</name>
</gene>
<accession>Q0I0Q6</accession>
<name>GPMI_SHESR</name>
<keyword id="KW-0324">Glycolysis</keyword>
<keyword id="KW-0413">Isomerase</keyword>
<keyword id="KW-0464">Manganese</keyword>
<keyword id="KW-0479">Metal-binding</keyword>
<evidence type="ECO:0000255" key="1">
    <source>
        <dbReference type="HAMAP-Rule" id="MF_01038"/>
    </source>
</evidence>